<comment type="function">
    <text evidence="2">Component of the ubiquinol-cytochrome c reductase complex (complex III or cytochrome b-c1 complex) that is part of the mitochondrial respiratory chain. The b-c1 complex mediates electron transfer from ubiquinol to cytochrome c. Contributes to the generation of a proton gradient across the mitochondrial membrane that is then used for ATP synthesis.</text>
</comment>
<comment type="cofactor">
    <cofactor evidence="2">
        <name>heme b</name>
        <dbReference type="ChEBI" id="CHEBI:60344"/>
    </cofactor>
    <text evidence="2">Binds 2 heme b groups non-covalently.</text>
</comment>
<comment type="subunit">
    <text evidence="2">The cytochrome bc1 complex contains 11 subunits: 3 respiratory subunits (MT-CYB, CYC1 and UQCRFS1), 2 core proteins (UQCRC1 and UQCRC2) and 6 low-molecular weight proteins (UQCRH/QCR6, UQCRB/QCR7, UQCRQ/QCR8, UQCR10/QCR9, UQCR11/QCR10 and a cleavage product of UQCRFS1). This cytochrome bc1 complex then forms a dimer.</text>
</comment>
<comment type="subcellular location">
    <subcellularLocation>
        <location evidence="2">Mitochondrion inner membrane</location>
        <topology evidence="2">Multi-pass membrane protein</topology>
    </subcellularLocation>
</comment>
<comment type="miscellaneous">
    <text evidence="1">Heme 1 (or BL or b562) is low-potential and absorbs at about 562 nm, and heme 2 (or BH or b566) is high-potential and absorbs at about 566 nm.</text>
</comment>
<comment type="similarity">
    <text evidence="3 4">Belongs to the cytochrome b family.</text>
</comment>
<comment type="caution">
    <text evidence="2">The full-length protein contains only eight transmembrane helices, not nine as predicted by bioinformatics tools.</text>
</comment>
<reference key="1">
    <citation type="journal article" date="1999" name="J. Mammal.">
        <title>Systematics of the genera Carollia and Rhinophylla based on the cytochrome b gene.</title>
        <authorList>
            <person name="Wright A.J."/>
            <person name="Van Den Bussche R.A."/>
            <person name="Lim B.K."/>
            <person name="Engstrom M.D."/>
            <person name="Baker R.J."/>
        </authorList>
    </citation>
    <scope>NUCLEOTIDE SEQUENCE [GENOMIC DNA]</scope>
    <source>
        <strain>Isolate TK 19550</strain>
    </source>
</reference>
<gene>
    <name type="primary">MT-CYB</name>
    <name type="synonym">COB</name>
    <name type="synonym">CYTB</name>
    <name type="synonym">MTCYB</name>
</gene>
<feature type="chain" id="PRO_0000060738" description="Cytochrome b">
    <location>
        <begin position="1"/>
        <end position="379"/>
    </location>
</feature>
<feature type="transmembrane region" description="Helical" evidence="2">
    <location>
        <begin position="33"/>
        <end position="53"/>
    </location>
</feature>
<feature type="transmembrane region" description="Helical" evidence="2">
    <location>
        <begin position="77"/>
        <end position="98"/>
    </location>
</feature>
<feature type="transmembrane region" description="Helical" evidence="2">
    <location>
        <begin position="113"/>
        <end position="133"/>
    </location>
</feature>
<feature type="transmembrane region" description="Helical" evidence="2">
    <location>
        <begin position="178"/>
        <end position="198"/>
    </location>
</feature>
<feature type="transmembrane region" description="Helical" evidence="2">
    <location>
        <begin position="226"/>
        <end position="246"/>
    </location>
</feature>
<feature type="transmembrane region" description="Helical" evidence="2">
    <location>
        <begin position="288"/>
        <end position="308"/>
    </location>
</feature>
<feature type="transmembrane region" description="Helical" evidence="2">
    <location>
        <begin position="320"/>
        <end position="340"/>
    </location>
</feature>
<feature type="transmembrane region" description="Helical" evidence="2">
    <location>
        <begin position="347"/>
        <end position="367"/>
    </location>
</feature>
<feature type="binding site" description="axial binding residue" evidence="2">
    <location>
        <position position="83"/>
    </location>
    <ligand>
        <name>heme b</name>
        <dbReference type="ChEBI" id="CHEBI:60344"/>
        <label>b562</label>
    </ligand>
    <ligandPart>
        <name>Fe</name>
        <dbReference type="ChEBI" id="CHEBI:18248"/>
    </ligandPart>
</feature>
<feature type="binding site" description="axial binding residue" evidence="2">
    <location>
        <position position="97"/>
    </location>
    <ligand>
        <name>heme b</name>
        <dbReference type="ChEBI" id="CHEBI:60344"/>
        <label>b566</label>
    </ligand>
    <ligandPart>
        <name>Fe</name>
        <dbReference type="ChEBI" id="CHEBI:18248"/>
    </ligandPart>
</feature>
<feature type="binding site" description="axial binding residue" evidence="2">
    <location>
        <position position="182"/>
    </location>
    <ligand>
        <name>heme b</name>
        <dbReference type="ChEBI" id="CHEBI:60344"/>
        <label>b562</label>
    </ligand>
    <ligandPart>
        <name>Fe</name>
        <dbReference type="ChEBI" id="CHEBI:18248"/>
    </ligandPart>
</feature>
<feature type="binding site" description="axial binding residue" evidence="2">
    <location>
        <position position="196"/>
    </location>
    <ligand>
        <name>heme b</name>
        <dbReference type="ChEBI" id="CHEBI:60344"/>
        <label>b566</label>
    </ligand>
    <ligandPart>
        <name>Fe</name>
        <dbReference type="ChEBI" id="CHEBI:18248"/>
    </ligandPart>
</feature>
<feature type="binding site" evidence="2">
    <location>
        <position position="201"/>
    </location>
    <ligand>
        <name>a ubiquinone</name>
        <dbReference type="ChEBI" id="CHEBI:16389"/>
    </ligand>
</feature>
<dbReference type="EMBL" id="AF187023">
    <property type="protein sequence ID" value="AAG25904.1"/>
    <property type="molecule type" value="Genomic_DNA"/>
</dbReference>
<dbReference type="SMR" id="Q9GAN4"/>
<dbReference type="GO" id="GO:0005743">
    <property type="term" value="C:mitochondrial inner membrane"/>
    <property type="evidence" value="ECO:0007669"/>
    <property type="project" value="UniProtKB-SubCell"/>
</dbReference>
<dbReference type="GO" id="GO:0045275">
    <property type="term" value="C:respiratory chain complex III"/>
    <property type="evidence" value="ECO:0007669"/>
    <property type="project" value="InterPro"/>
</dbReference>
<dbReference type="GO" id="GO:0046872">
    <property type="term" value="F:metal ion binding"/>
    <property type="evidence" value="ECO:0007669"/>
    <property type="project" value="UniProtKB-KW"/>
</dbReference>
<dbReference type="GO" id="GO:0008121">
    <property type="term" value="F:ubiquinol-cytochrome-c reductase activity"/>
    <property type="evidence" value="ECO:0007669"/>
    <property type="project" value="InterPro"/>
</dbReference>
<dbReference type="GO" id="GO:0006122">
    <property type="term" value="P:mitochondrial electron transport, ubiquinol to cytochrome c"/>
    <property type="evidence" value="ECO:0007669"/>
    <property type="project" value="TreeGrafter"/>
</dbReference>
<dbReference type="CDD" id="cd00290">
    <property type="entry name" value="cytochrome_b_C"/>
    <property type="match status" value="1"/>
</dbReference>
<dbReference type="CDD" id="cd00284">
    <property type="entry name" value="Cytochrome_b_N"/>
    <property type="match status" value="1"/>
</dbReference>
<dbReference type="FunFam" id="1.20.810.10:FF:000002">
    <property type="entry name" value="Cytochrome b"/>
    <property type="match status" value="1"/>
</dbReference>
<dbReference type="Gene3D" id="1.20.810.10">
    <property type="entry name" value="Cytochrome Bc1 Complex, Chain C"/>
    <property type="match status" value="1"/>
</dbReference>
<dbReference type="InterPro" id="IPR005798">
    <property type="entry name" value="Cyt_b/b6_C"/>
</dbReference>
<dbReference type="InterPro" id="IPR036150">
    <property type="entry name" value="Cyt_b/b6_C_sf"/>
</dbReference>
<dbReference type="InterPro" id="IPR005797">
    <property type="entry name" value="Cyt_b/b6_N"/>
</dbReference>
<dbReference type="InterPro" id="IPR027387">
    <property type="entry name" value="Cytb/b6-like_sf"/>
</dbReference>
<dbReference type="InterPro" id="IPR030689">
    <property type="entry name" value="Cytochrome_b"/>
</dbReference>
<dbReference type="InterPro" id="IPR048260">
    <property type="entry name" value="Cytochrome_b_C_euk/bac"/>
</dbReference>
<dbReference type="InterPro" id="IPR048259">
    <property type="entry name" value="Cytochrome_b_N_euk/bac"/>
</dbReference>
<dbReference type="InterPro" id="IPR016174">
    <property type="entry name" value="Di-haem_cyt_TM"/>
</dbReference>
<dbReference type="PANTHER" id="PTHR19271">
    <property type="entry name" value="CYTOCHROME B"/>
    <property type="match status" value="1"/>
</dbReference>
<dbReference type="PANTHER" id="PTHR19271:SF16">
    <property type="entry name" value="CYTOCHROME B"/>
    <property type="match status" value="1"/>
</dbReference>
<dbReference type="Pfam" id="PF00032">
    <property type="entry name" value="Cytochrom_B_C"/>
    <property type="match status" value="1"/>
</dbReference>
<dbReference type="Pfam" id="PF00033">
    <property type="entry name" value="Cytochrome_B"/>
    <property type="match status" value="1"/>
</dbReference>
<dbReference type="PIRSF" id="PIRSF038885">
    <property type="entry name" value="COB"/>
    <property type="match status" value="1"/>
</dbReference>
<dbReference type="SUPFAM" id="SSF81648">
    <property type="entry name" value="a domain/subunit of cytochrome bc1 complex (Ubiquinol-cytochrome c reductase)"/>
    <property type="match status" value="1"/>
</dbReference>
<dbReference type="SUPFAM" id="SSF81342">
    <property type="entry name" value="Transmembrane di-heme cytochromes"/>
    <property type="match status" value="1"/>
</dbReference>
<dbReference type="PROSITE" id="PS51003">
    <property type="entry name" value="CYTB_CTER"/>
    <property type="match status" value="1"/>
</dbReference>
<dbReference type="PROSITE" id="PS51002">
    <property type="entry name" value="CYTB_NTER"/>
    <property type="match status" value="1"/>
</dbReference>
<geneLocation type="mitochondrion"/>
<name>CYB_CARSU</name>
<keyword id="KW-0249">Electron transport</keyword>
<keyword id="KW-0349">Heme</keyword>
<keyword id="KW-0408">Iron</keyword>
<keyword id="KW-0472">Membrane</keyword>
<keyword id="KW-0479">Metal-binding</keyword>
<keyword id="KW-0496">Mitochondrion</keyword>
<keyword id="KW-0999">Mitochondrion inner membrane</keyword>
<keyword id="KW-0679">Respiratory chain</keyword>
<keyword id="KW-0812">Transmembrane</keyword>
<keyword id="KW-1133">Transmembrane helix</keyword>
<keyword id="KW-0813">Transport</keyword>
<keyword id="KW-0830">Ubiquinone</keyword>
<protein>
    <recommendedName>
        <fullName>Cytochrome b</fullName>
    </recommendedName>
    <alternativeName>
        <fullName>Complex III subunit 3</fullName>
    </alternativeName>
    <alternativeName>
        <fullName>Complex III subunit III</fullName>
    </alternativeName>
    <alternativeName>
        <fullName>Cytochrome b-c1 complex subunit 3</fullName>
    </alternativeName>
    <alternativeName>
        <fullName>Ubiquinol-cytochrome-c reductase complex cytochrome b subunit</fullName>
    </alternativeName>
</protein>
<organism>
    <name type="scientific">Carollia subrufa</name>
    <name type="common">Gray short-tailed bat</name>
    <dbReference type="NCBI Taxonomy" id="138697"/>
    <lineage>
        <taxon>Eukaryota</taxon>
        <taxon>Metazoa</taxon>
        <taxon>Chordata</taxon>
        <taxon>Craniata</taxon>
        <taxon>Vertebrata</taxon>
        <taxon>Euteleostomi</taxon>
        <taxon>Mammalia</taxon>
        <taxon>Eutheria</taxon>
        <taxon>Laurasiatheria</taxon>
        <taxon>Chiroptera</taxon>
        <taxon>Yangochiroptera</taxon>
        <taxon>Phyllostomidae</taxon>
        <taxon>Carolliinae</taxon>
        <taxon>Carollia</taxon>
    </lineage>
</organism>
<proteinExistence type="inferred from homology"/>
<evidence type="ECO:0000250" key="1"/>
<evidence type="ECO:0000250" key="2">
    <source>
        <dbReference type="UniProtKB" id="P00157"/>
    </source>
</evidence>
<evidence type="ECO:0000255" key="3">
    <source>
        <dbReference type="PROSITE-ProRule" id="PRU00967"/>
    </source>
</evidence>
<evidence type="ECO:0000255" key="4">
    <source>
        <dbReference type="PROSITE-ProRule" id="PRU00968"/>
    </source>
</evidence>
<sequence length="379" mass="42672">MTNIRKTHPLLKIVNSSFIDLPAPSSLSSWWNFGSLLGVCLAVQILTGLFLAMHYTSDTATAFNSVTHICRDVNYGWVLRYLHANGASMFFICLYLHVGRGLYYGSYTYSETWNVGILLLFAVMATAFMGYVLPWGQMSFWGATVITNLLSAIPYIGTDLVQWIWGGFSVDKATLTRFFAFHFLLPFVVTALVMVHLLFLHETGSNNPTGIPSDSDMIPFHPYYTIKDILGFLMMLTALSTLVLFSPDLLGDPDNYTPANPLSTPPHIKPEWYFLFAYAILRSIPNKLGGVLALVLSILILAIVPMLHMSKQRSMMFRPLSQCLFWLLVAVLFTLTWIGGQPVEHPYIIIGQMASVLYFLIILVFMPLISIVENRLLNW</sequence>
<accession>Q9GAN4</accession>